<organism>
    <name type="scientific">Burkholderia pseudomallei (strain K96243)</name>
    <dbReference type="NCBI Taxonomy" id="272560"/>
    <lineage>
        <taxon>Bacteria</taxon>
        <taxon>Pseudomonadati</taxon>
        <taxon>Pseudomonadota</taxon>
        <taxon>Betaproteobacteria</taxon>
        <taxon>Burkholderiales</taxon>
        <taxon>Burkholderiaceae</taxon>
        <taxon>Burkholderia</taxon>
        <taxon>pseudomallei group</taxon>
    </lineage>
</organism>
<reference key="1">
    <citation type="journal article" date="2004" name="Proc. Natl. Acad. Sci. U.S.A.">
        <title>Genomic plasticity of the causative agent of melioidosis, Burkholderia pseudomallei.</title>
        <authorList>
            <person name="Holden M.T.G."/>
            <person name="Titball R.W."/>
            <person name="Peacock S.J."/>
            <person name="Cerdeno-Tarraga A.-M."/>
            <person name="Atkins T."/>
            <person name="Crossman L.C."/>
            <person name="Pitt T."/>
            <person name="Churcher C."/>
            <person name="Mungall K.L."/>
            <person name="Bentley S.D."/>
            <person name="Sebaihia M."/>
            <person name="Thomson N.R."/>
            <person name="Bason N."/>
            <person name="Beacham I.R."/>
            <person name="Brooks K."/>
            <person name="Brown K.A."/>
            <person name="Brown N.F."/>
            <person name="Challis G.L."/>
            <person name="Cherevach I."/>
            <person name="Chillingworth T."/>
            <person name="Cronin A."/>
            <person name="Crossett B."/>
            <person name="Davis P."/>
            <person name="DeShazer D."/>
            <person name="Feltwell T."/>
            <person name="Fraser A."/>
            <person name="Hance Z."/>
            <person name="Hauser H."/>
            <person name="Holroyd S."/>
            <person name="Jagels K."/>
            <person name="Keith K.E."/>
            <person name="Maddison M."/>
            <person name="Moule S."/>
            <person name="Price C."/>
            <person name="Quail M.A."/>
            <person name="Rabbinowitsch E."/>
            <person name="Rutherford K."/>
            <person name="Sanders M."/>
            <person name="Simmonds M."/>
            <person name="Songsivilai S."/>
            <person name="Stevens K."/>
            <person name="Tumapa S."/>
            <person name="Vesaratchavest M."/>
            <person name="Whitehead S."/>
            <person name="Yeats C."/>
            <person name="Barrell B.G."/>
            <person name="Oyston P.C.F."/>
            <person name="Parkhill J."/>
        </authorList>
    </citation>
    <scope>NUCLEOTIDE SEQUENCE [LARGE SCALE GENOMIC DNA]</scope>
    <source>
        <strain>K96243</strain>
    </source>
</reference>
<proteinExistence type="inferred from homology"/>
<dbReference type="EMBL" id="BX571965">
    <property type="protein sequence ID" value="CAH37207.1"/>
    <property type="molecule type" value="Genomic_DNA"/>
</dbReference>
<dbReference type="RefSeq" id="WP_004197945.1">
    <property type="nucleotide sequence ID" value="NZ_CP009538.1"/>
</dbReference>
<dbReference type="RefSeq" id="YP_109790.1">
    <property type="nucleotide sequence ID" value="NC_006350.1"/>
</dbReference>
<dbReference type="SMR" id="Q63Q28"/>
<dbReference type="STRING" id="272560.BPSL3196"/>
<dbReference type="GeneID" id="93126536"/>
<dbReference type="KEGG" id="bps:BPSL3196"/>
<dbReference type="PATRIC" id="fig|272560.51.peg.2042"/>
<dbReference type="eggNOG" id="COG0098">
    <property type="taxonomic scope" value="Bacteria"/>
</dbReference>
<dbReference type="PRO" id="PR:Q63Q28"/>
<dbReference type="Proteomes" id="UP000000605">
    <property type="component" value="Chromosome 1"/>
</dbReference>
<dbReference type="GO" id="GO:0015935">
    <property type="term" value="C:small ribosomal subunit"/>
    <property type="evidence" value="ECO:0007669"/>
    <property type="project" value="InterPro"/>
</dbReference>
<dbReference type="GO" id="GO:0019843">
    <property type="term" value="F:rRNA binding"/>
    <property type="evidence" value="ECO:0007669"/>
    <property type="project" value="UniProtKB-UniRule"/>
</dbReference>
<dbReference type="GO" id="GO:0003735">
    <property type="term" value="F:structural constituent of ribosome"/>
    <property type="evidence" value="ECO:0007669"/>
    <property type="project" value="InterPro"/>
</dbReference>
<dbReference type="GO" id="GO:0006412">
    <property type="term" value="P:translation"/>
    <property type="evidence" value="ECO:0007669"/>
    <property type="project" value="UniProtKB-UniRule"/>
</dbReference>
<dbReference type="FunFam" id="3.30.160.20:FF:000001">
    <property type="entry name" value="30S ribosomal protein S5"/>
    <property type="match status" value="1"/>
</dbReference>
<dbReference type="FunFam" id="3.30.230.10:FF:000002">
    <property type="entry name" value="30S ribosomal protein S5"/>
    <property type="match status" value="1"/>
</dbReference>
<dbReference type="Gene3D" id="3.30.160.20">
    <property type="match status" value="1"/>
</dbReference>
<dbReference type="Gene3D" id="3.30.230.10">
    <property type="match status" value="1"/>
</dbReference>
<dbReference type="HAMAP" id="MF_01307_B">
    <property type="entry name" value="Ribosomal_uS5_B"/>
    <property type="match status" value="1"/>
</dbReference>
<dbReference type="InterPro" id="IPR020568">
    <property type="entry name" value="Ribosomal_Su5_D2-typ_SF"/>
</dbReference>
<dbReference type="InterPro" id="IPR000851">
    <property type="entry name" value="Ribosomal_uS5"/>
</dbReference>
<dbReference type="InterPro" id="IPR005712">
    <property type="entry name" value="Ribosomal_uS5_bac-type"/>
</dbReference>
<dbReference type="InterPro" id="IPR005324">
    <property type="entry name" value="Ribosomal_uS5_C"/>
</dbReference>
<dbReference type="InterPro" id="IPR013810">
    <property type="entry name" value="Ribosomal_uS5_N"/>
</dbReference>
<dbReference type="InterPro" id="IPR018192">
    <property type="entry name" value="Ribosomal_uS5_N_CS"/>
</dbReference>
<dbReference type="InterPro" id="IPR014721">
    <property type="entry name" value="Ribsml_uS5_D2-typ_fold_subgr"/>
</dbReference>
<dbReference type="NCBIfam" id="TIGR01021">
    <property type="entry name" value="rpsE_bact"/>
    <property type="match status" value="1"/>
</dbReference>
<dbReference type="PANTHER" id="PTHR48277">
    <property type="entry name" value="MITOCHONDRIAL RIBOSOMAL PROTEIN S5"/>
    <property type="match status" value="1"/>
</dbReference>
<dbReference type="PANTHER" id="PTHR48277:SF1">
    <property type="entry name" value="MITOCHONDRIAL RIBOSOMAL PROTEIN S5"/>
    <property type="match status" value="1"/>
</dbReference>
<dbReference type="Pfam" id="PF00333">
    <property type="entry name" value="Ribosomal_S5"/>
    <property type="match status" value="1"/>
</dbReference>
<dbReference type="Pfam" id="PF03719">
    <property type="entry name" value="Ribosomal_S5_C"/>
    <property type="match status" value="1"/>
</dbReference>
<dbReference type="SUPFAM" id="SSF54768">
    <property type="entry name" value="dsRNA-binding domain-like"/>
    <property type="match status" value="1"/>
</dbReference>
<dbReference type="SUPFAM" id="SSF54211">
    <property type="entry name" value="Ribosomal protein S5 domain 2-like"/>
    <property type="match status" value="1"/>
</dbReference>
<dbReference type="PROSITE" id="PS00585">
    <property type="entry name" value="RIBOSOMAL_S5"/>
    <property type="match status" value="1"/>
</dbReference>
<dbReference type="PROSITE" id="PS50881">
    <property type="entry name" value="S5_DSRBD"/>
    <property type="match status" value="1"/>
</dbReference>
<keyword id="KW-1185">Reference proteome</keyword>
<keyword id="KW-0687">Ribonucleoprotein</keyword>
<keyword id="KW-0689">Ribosomal protein</keyword>
<keyword id="KW-0694">RNA-binding</keyword>
<keyword id="KW-0699">rRNA-binding</keyword>
<sequence>MAKMQAKVQADERDDGLREKMISVNRVTKVVKGGRILGFAALTVVGDGDGRVGMGKGKAKEVPVAVQKAMEQARRNMFKVPLKNGTLQHEVHGKHGASTVLLAPAKDGTGVIAGGPMRAVFDVMGVQNVVAKSHGSTNPYNLVRATLDGLRKQSTPADIAAKRGKSVEEILG</sequence>
<evidence type="ECO:0000255" key="1">
    <source>
        <dbReference type="HAMAP-Rule" id="MF_01307"/>
    </source>
</evidence>
<evidence type="ECO:0000305" key="2"/>
<accession>Q63Q28</accession>
<protein>
    <recommendedName>
        <fullName evidence="1">Small ribosomal subunit protein uS5</fullName>
    </recommendedName>
    <alternativeName>
        <fullName evidence="2">30S ribosomal protein S5</fullName>
    </alternativeName>
</protein>
<comment type="function">
    <text evidence="1">With S4 and S12 plays an important role in translational accuracy.</text>
</comment>
<comment type="function">
    <text evidence="1">Located at the back of the 30S subunit body where it stabilizes the conformation of the head with respect to the body.</text>
</comment>
<comment type="subunit">
    <text evidence="1">Part of the 30S ribosomal subunit. Contacts proteins S4 and S8.</text>
</comment>
<comment type="domain">
    <text>The N-terminal domain interacts with the head of the 30S subunit; the C-terminal domain interacts with the body and contacts protein S4. The interaction surface between S4 and S5 is involved in control of translational fidelity.</text>
</comment>
<comment type="similarity">
    <text evidence="1">Belongs to the universal ribosomal protein uS5 family.</text>
</comment>
<name>RS5_BURPS</name>
<gene>
    <name evidence="1" type="primary">rpsE</name>
    <name type="ordered locus">BPSL3196</name>
</gene>
<feature type="chain" id="PRO_0000131490" description="Small ribosomal subunit protein uS5">
    <location>
        <begin position="1"/>
        <end position="172"/>
    </location>
</feature>
<feature type="domain" description="S5 DRBM" evidence="1">
    <location>
        <begin position="17"/>
        <end position="80"/>
    </location>
</feature>